<name>RPPH_SALA4</name>
<proteinExistence type="inferred from homology"/>
<dbReference type="EC" id="3.6.1.-" evidence="1"/>
<dbReference type="EMBL" id="CP001138">
    <property type="protein sequence ID" value="ACH52681.1"/>
    <property type="molecule type" value="Genomic_DNA"/>
</dbReference>
<dbReference type="RefSeq" id="WP_000564481.1">
    <property type="nucleotide sequence ID" value="NC_011149.1"/>
</dbReference>
<dbReference type="SMR" id="B5F4U8"/>
<dbReference type="KEGG" id="sea:SeAg_B3151"/>
<dbReference type="HOGENOM" id="CLU_087195_3_2_6"/>
<dbReference type="Proteomes" id="UP000008819">
    <property type="component" value="Chromosome"/>
</dbReference>
<dbReference type="GO" id="GO:0005737">
    <property type="term" value="C:cytoplasm"/>
    <property type="evidence" value="ECO:0007669"/>
    <property type="project" value="TreeGrafter"/>
</dbReference>
<dbReference type="GO" id="GO:0034353">
    <property type="term" value="F:mRNA 5'-diphosphatase activity"/>
    <property type="evidence" value="ECO:0007669"/>
    <property type="project" value="TreeGrafter"/>
</dbReference>
<dbReference type="GO" id="GO:0006402">
    <property type="term" value="P:mRNA catabolic process"/>
    <property type="evidence" value="ECO:0007669"/>
    <property type="project" value="TreeGrafter"/>
</dbReference>
<dbReference type="CDD" id="cd03671">
    <property type="entry name" value="NUDIX_Ap4A_hydrolase_plant_like"/>
    <property type="match status" value="1"/>
</dbReference>
<dbReference type="FunFam" id="3.90.79.10:FF:000001">
    <property type="entry name" value="RNA pyrophosphohydrolase"/>
    <property type="match status" value="1"/>
</dbReference>
<dbReference type="Gene3D" id="3.90.79.10">
    <property type="entry name" value="Nucleoside Triphosphate Pyrophosphohydrolase"/>
    <property type="match status" value="1"/>
</dbReference>
<dbReference type="HAMAP" id="MF_00298">
    <property type="entry name" value="Nudix_RppH"/>
    <property type="match status" value="1"/>
</dbReference>
<dbReference type="InterPro" id="IPR020476">
    <property type="entry name" value="Nudix_hydrolase"/>
</dbReference>
<dbReference type="InterPro" id="IPR015797">
    <property type="entry name" value="NUDIX_hydrolase-like_dom_sf"/>
</dbReference>
<dbReference type="InterPro" id="IPR020084">
    <property type="entry name" value="NUDIX_hydrolase_CS"/>
</dbReference>
<dbReference type="InterPro" id="IPR000086">
    <property type="entry name" value="NUDIX_hydrolase_dom"/>
</dbReference>
<dbReference type="InterPro" id="IPR022927">
    <property type="entry name" value="RppH"/>
</dbReference>
<dbReference type="NCBIfam" id="NF001934">
    <property type="entry name" value="PRK00714.1-1"/>
    <property type="match status" value="1"/>
</dbReference>
<dbReference type="NCBIfam" id="NF001937">
    <property type="entry name" value="PRK00714.1-4"/>
    <property type="match status" value="1"/>
</dbReference>
<dbReference type="NCBIfam" id="NF001938">
    <property type="entry name" value="PRK00714.1-5"/>
    <property type="match status" value="1"/>
</dbReference>
<dbReference type="PANTHER" id="PTHR23114">
    <property type="entry name" value="M7GPPPN-MRNA HYDROLASE"/>
    <property type="match status" value="1"/>
</dbReference>
<dbReference type="PANTHER" id="PTHR23114:SF17">
    <property type="entry name" value="M7GPPPN-MRNA HYDROLASE"/>
    <property type="match status" value="1"/>
</dbReference>
<dbReference type="Pfam" id="PF00293">
    <property type="entry name" value="NUDIX"/>
    <property type="match status" value="1"/>
</dbReference>
<dbReference type="PRINTS" id="PR00502">
    <property type="entry name" value="NUDIXFAMILY"/>
</dbReference>
<dbReference type="SUPFAM" id="SSF55811">
    <property type="entry name" value="Nudix"/>
    <property type="match status" value="1"/>
</dbReference>
<dbReference type="PROSITE" id="PS51462">
    <property type="entry name" value="NUDIX"/>
    <property type="match status" value="1"/>
</dbReference>
<dbReference type="PROSITE" id="PS00893">
    <property type="entry name" value="NUDIX_BOX"/>
    <property type="match status" value="1"/>
</dbReference>
<feature type="chain" id="PRO_1000115291" description="RNA pyrophosphohydrolase">
    <location>
        <begin position="1"/>
        <end position="176"/>
    </location>
</feature>
<feature type="domain" description="Nudix hydrolase" evidence="1">
    <location>
        <begin position="6"/>
        <end position="149"/>
    </location>
</feature>
<feature type="short sequence motif" description="Nudix box">
    <location>
        <begin position="38"/>
        <end position="59"/>
    </location>
</feature>
<accession>B5F4U8</accession>
<organism>
    <name type="scientific">Salmonella agona (strain SL483)</name>
    <dbReference type="NCBI Taxonomy" id="454166"/>
    <lineage>
        <taxon>Bacteria</taxon>
        <taxon>Pseudomonadati</taxon>
        <taxon>Pseudomonadota</taxon>
        <taxon>Gammaproteobacteria</taxon>
        <taxon>Enterobacterales</taxon>
        <taxon>Enterobacteriaceae</taxon>
        <taxon>Salmonella</taxon>
    </lineage>
</organism>
<protein>
    <recommendedName>
        <fullName evidence="1">RNA pyrophosphohydrolase</fullName>
        <ecNumber evidence="1">3.6.1.-</ecNumber>
    </recommendedName>
    <alternativeName>
        <fullName evidence="1">(Di)nucleoside polyphosphate hydrolase</fullName>
    </alternativeName>
</protein>
<comment type="function">
    <text evidence="1">Accelerates the degradation of transcripts by removing pyrophosphate from the 5'-end of triphosphorylated RNA, leading to a more labile monophosphorylated state that can stimulate subsequent ribonuclease cleavage.</text>
</comment>
<comment type="cofactor">
    <cofactor evidence="1">
        <name>a divalent metal cation</name>
        <dbReference type="ChEBI" id="CHEBI:60240"/>
    </cofactor>
</comment>
<comment type="similarity">
    <text evidence="1">Belongs to the Nudix hydrolase family. RppH subfamily.</text>
</comment>
<sequence>MIDDDGYRPNVGIVICNRQGQVMWARRFGQHSWQFPQGGINPGESAEQAMYRELFEEVGLSRKDVRILASTRNWLRYKLPKRLVRWDTKPVCIGQKQKWFLLQLMSADAEINMQTSSTPEFDGWRWVSYWYPVRQVVSFKRDVYRRVMKEFASVVMALQDNPPKLQSAPAYRRKRG</sequence>
<evidence type="ECO:0000255" key="1">
    <source>
        <dbReference type="HAMAP-Rule" id="MF_00298"/>
    </source>
</evidence>
<gene>
    <name evidence="1" type="primary">rppH</name>
    <name evidence="1" type="synonym">nudH</name>
    <name type="ordered locus">SeAg_B3151</name>
</gene>
<keyword id="KW-0378">Hydrolase</keyword>
<reference key="1">
    <citation type="journal article" date="2011" name="J. Bacteriol.">
        <title>Comparative genomics of 28 Salmonella enterica isolates: evidence for CRISPR-mediated adaptive sublineage evolution.</title>
        <authorList>
            <person name="Fricke W.F."/>
            <person name="Mammel M.K."/>
            <person name="McDermott P.F."/>
            <person name="Tartera C."/>
            <person name="White D.G."/>
            <person name="Leclerc J.E."/>
            <person name="Ravel J."/>
            <person name="Cebula T.A."/>
        </authorList>
    </citation>
    <scope>NUCLEOTIDE SEQUENCE [LARGE SCALE GENOMIC DNA]</scope>
    <source>
        <strain>SL483</strain>
    </source>
</reference>